<keyword id="KW-0687">Ribonucleoprotein</keyword>
<keyword id="KW-0689">Ribosomal protein</keyword>
<keyword id="KW-0694">RNA-binding</keyword>
<keyword id="KW-0699">rRNA-binding</keyword>
<proteinExistence type="inferred from homology"/>
<evidence type="ECO:0000255" key="1">
    <source>
        <dbReference type="HAMAP-Rule" id="MF_01365"/>
    </source>
</evidence>
<evidence type="ECO:0000305" key="2"/>
<organism>
    <name type="scientific">Thermococcus onnurineus (strain NA1)</name>
    <dbReference type="NCBI Taxonomy" id="523850"/>
    <lineage>
        <taxon>Archaea</taxon>
        <taxon>Methanobacteriati</taxon>
        <taxon>Methanobacteriota</taxon>
        <taxon>Thermococci</taxon>
        <taxon>Thermococcales</taxon>
        <taxon>Thermococcaceae</taxon>
        <taxon>Thermococcus</taxon>
    </lineage>
</organism>
<protein>
    <recommendedName>
        <fullName evidence="1">Large ribosomal subunit protein uL6</fullName>
    </recommendedName>
    <alternativeName>
        <fullName evidence="2">50S ribosomal protein L6</fullName>
    </alternativeName>
</protein>
<accession>B6YSN0</accession>
<comment type="function">
    <text evidence="1">This protein binds to the 23S rRNA, and is important in its secondary structure. It is located near the subunit interface in the base of the L7/L12 stalk, and near the tRNA binding site of the peptidyltransferase center.</text>
</comment>
<comment type="subunit">
    <text evidence="1">Part of the 50S ribosomal subunit.</text>
</comment>
<comment type="similarity">
    <text evidence="1">Belongs to the universal ribosomal protein uL6 family.</text>
</comment>
<dbReference type="EMBL" id="CP000855">
    <property type="protein sequence ID" value="ACJ15567.1"/>
    <property type="molecule type" value="Genomic_DNA"/>
</dbReference>
<dbReference type="RefSeq" id="WP_012571040.1">
    <property type="nucleotide sequence ID" value="NC_011529.1"/>
</dbReference>
<dbReference type="SMR" id="B6YSN0"/>
<dbReference type="STRING" id="523850.TON_0082"/>
<dbReference type="GeneID" id="7017729"/>
<dbReference type="KEGG" id="ton:TON_0082"/>
<dbReference type="PATRIC" id="fig|523850.10.peg.82"/>
<dbReference type="eggNOG" id="arCOG04090">
    <property type="taxonomic scope" value="Archaea"/>
</dbReference>
<dbReference type="HOGENOM" id="CLU_065464_0_0_2"/>
<dbReference type="OrthoDB" id="7144at2157"/>
<dbReference type="Proteomes" id="UP000002727">
    <property type="component" value="Chromosome"/>
</dbReference>
<dbReference type="GO" id="GO:0022625">
    <property type="term" value="C:cytosolic large ribosomal subunit"/>
    <property type="evidence" value="ECO:0007669"/>
    <property type="project" value="TreeGrafter"/>
</dbReference>
<dbReference type="GO" id="GO:0019843">
    <property type="term" value="F:rRNA binding"/>
    <property type="evidence" value="ECO:0007669"/>
    <property type="project" value="UniProtKB-UniRule"/>
</dbReference>
<dbReference type="GO" id="GO:0003735">
    <property type="term" value="F:structural constituent of ribosome"/>
    <property type="evidence" value="ECO:0007669"/>
    <property type="project" value="InterPro"/>
</dbReference>
<dbReference type="GO" id="GO:0002181">
    <property type="term" value="P:cytoplasmic translation"/>
    <property type="evidence" value="ECO:0007669"/>
    <property type="project" value="TreeGrafter"/>
</dbReference>
<dbReference type="FunFam" id="3.90.930.12:FF:000008">
    <property type="entry name" value="50S ribosomal protein L6"/>
    <property type="match status" value="1"/>
</dbReference>
<dbReference type="FunFam" id="3.90.930.12:FF:000004">
    <property type="entry name" value="60S ribosomal protein L9"/>
    <property type="match status" value="1"/>
</dbReference>
<dbReference type="Gene3D" id="3.90.930.12">
    <property type="entry name" value="Ribosomal protein L6, alpha-beta domain"/>
    <property type="match status" value="2"/>
</dbReference>
<dbReference type="HAMAP" id="MF_01365_A">
    <property type="entry name" value="Ribosomal_uL6_A"/>
    <property type="match status" value="1"/>
</dbReference>
<dbReference type="InterPro" id="IPR000702">
    <property type="entry name" value="Ribosomal_uL6-like"/>
</dbReference>
<dbReference type="InterPro" id="IPR036789">
    <property type="entry name" value="Ribosomal_uL6-like_a/b-dom_sf"/>
</dbReference>
<dbReference type="InterPro" id="IPR020040">
    <property type="entry name" value="Ribosomal_uL6_a/b-dom"/>
</dbReference>
<dbReference type="InterPro" id="IPR019907">
    <property type="entry name" value="Ribosomal_uL6_arc"/>
</dbReference>
<dbReference type="InterPro" id="IPR002359">
    <property type="entry name" value="Ribosomal_uL6_CS2"/>
</dbReference>
<dbReference type="NCBIfam" id="NF004037">
    <property type="entry name" value="PRK05518.1"/>
    <property type="match status" value="1"/>
</dbReference>
<dbReference type="NCBIfam" id="TIGR03653">
    <property type="entry name" value="uL6_arch"/>
    <property type="match status" value="1"/>
</dbReference>
<dbReference type="PANTHER" id="PTHR11655:SF16">
    <property type="entry name" value="60S RIBOSOMAL PROTEIN L9"/>
    <property type="match status" value="1"/>
</dbReference>
<dbReference type="PANTHER" id="PTHR11655">
    <property type="entry name" value="60S/50S RIBOSOMAL PROTEIN L6/L9"/>
    <property type="match status" value="1"/>
</dbReference>
<dbReference type="Pfam" id="PF00347">
    <property type="entry name" value="Ribosomal_L6"/>
    <property type="match status" value="2"/>
</dbReference>
<dbReference type="PIRSF" id="PIRSF002162">
    <property type="entry name" value="Ribosomal_L6"/>
    <property type="match status" value="1"/>
</dbReference>
<dbReference type="SUPFAM" id="SSF56053">
    <property type="entry name" value="Ribosomal protein L6"/>
    <property type="match status" value="2"/>
</dbReference>
<dbReference type="PROSITE" id="PS00700">
    <property type="entry name" value="RIBOSOMAL_L6_2"/>
    <property type="match status" value="1"/>
</dbReference>
<feature type="chain" id="PRO_1000144061" description="Large ribosomal subunit protein uL6">
    <location>
        <begin position="1"/>
        <end position="184"/>
    </location>
</feature>
<reference key="1">
    <citation type="journal article" date="2008" name="J. Bacteriol.">
        <title>The complete genome sequence of Thermococcus onnurineus NA1 reveals a mixed heterotrophic and carboxydotrophic metabolism.</title>
        <authorList>
            <person name="Lee H.S."/>
            <person name="Kang S.G."/>
            <person name="Bae S.S."/>
            <person name="Lim J.K."/>
            <person name="Cho Y."/>
            <person name="Kim Y.J."/>
            <person name="Jeon J.H."/>
            <person name="Cha S.-S."/>
            <person name="Kwon K.K."/>
            <person name="Kim H.-T."/>
            <person name="Park C.-J."/>
            <person name="Lee H.-W."/>
            <person name="Kim S.I."/>
            <person name="Chun J."/>
            <person name="Colwell R.R."/>
            <person name="Kim S.-J."/>
            <person name="Lee J.-H."/>
        </authorList>
    </citation>
    <scope>NUCLEOTIDE SEQUENCE [LARGE SCALE GENOMIC DNA]</scope>
    <source>
        <strain>NA1</strain>
    </source>
</reference>
<sequence length="184" mass="20841">MPIDAWVREEVEIPEGVEVTIERNVVKVRGPKGELERELKYPGVQIFTEDGKVVIYKEFPRKKDIAIARTFKAHIANMIKGVTEGFTYKLKVVYSHFPMTVKVQGDEVVIENFLGEKNPRRAKILPGVTVKVMGSEVIVEGIDKEAVGQTAANIEQATRITKWDRRVFQDGIYIVEKAGKPIKF</sequence>
<name>RL6_THEON</name>
<gene>
    <name evidence="1" type="primary">rpl6</name>
    <name type="ordered locus">TON_0082</name>
</gene>